<comment type="function">
    <text evidence="2">mRNA-binding protein involved in proper cytoplasmic distribution of mitochondria.</text>
</comment>
<comment type="subcellular location">
    <subcellularLocation>
        <location evidence="2">Cytoplasm</location>
    </subcellularLocation>
</comment>
<comment type="similarity">
    <text evidence="2">Belongs to the CLU family.</text>
</comment>
<sequence>MALEIDAKNAAATGDAGTIGKAKAKENKNHNNNNNAPAAGEKNLVNGSSAATKKKGKKNRNKSPPQNAVEAEASAALSNGHSENGDAADANANVLAEKGEGVAAGAVVGDGAEGGASAEGAVAEGDAAAAGEDVDLDALHDIGITVNISSPGTDVLSVQLSSMELVQEIHQLLMDREETCHRTCFSLQLDNVTLDNFAELKTIESLEQGSTIRVVEEPYTMREARIHVRHVRDLLKNLDPADAYNGIDCTSLTYLNTITQGDLLDKKRTRPDSVDCTPPDYVTPGVREPPLLPLHPNIKNAKGPQALKVLTTSAWNPPPGPRKLHGDLMYLYVVTMEDKRFHISACSKGFYINQSTDECFNPKPDNPSHLSHSLIDLLSHISPSFRRAFQAIQKRRTMRHAFERVATPYQVYQWAAPQLEHTVDAIRAEDAFSSKLGYEEHIPGQTRDWNEELQTTRELPRKTLPERLLRERAIFKVHGDFVTAATRGAMAVIDGNVLAINPGEDAKMQMFIWNNIFFSLGFDVRDHYKELGGDHAAFVAPRYDLHGVRVYNAVDIEGLYTLGTVVIDYRGYRVTAQSIIPGILEREQEQSVVYGSIDFGKTVLSHPKYLELLRQAGKHLKILPHSVLNERDEPVELCSSVECKGIIGNDGRHYILDLLRTFPPDVNFLKLQDVQLSKELTEMGFPIEHRHKLCCLRQELLEAFIEDRYVTFIRIAAVHLQQLNAKKQAATANAEKELPAIAEKQEEPNEEQPEKTEEQPAEKEESKPTPSETKSAEAMVNAIREAQSNVAVSNEVQAAEVVKRACAAVGSLKEKEFDFRFNPDVFSPGIRHVDGPDGGVQSLAKQKRLVQDAAEFLVLKQIPAFIKEHMAHSSPPIDGQSLTESLHSHGINVRYLGKVIKMLGQMPRMDYLHRIAILEIIVRATKHIYYTYMQSTEPLHLSAAISHFLNCLLTTGPVNPAVSSDELHKKQPRNNSGKHNKHKAAKASKPQAAAAQNGNATAAGSGGAGATTSGATSSNSDWTLVTPRSLWQQIRKEVKAYWNWELDCDSIESAGAKYGLLRISLLRAFCLKVGIQVLLREYNFESKHKPTFGDDDIVNVFPVVKHISPRATDAYNFYTTGQAKIQQGMLKEGYELISEALNLLNNVFGAMHQENDSCLRMLARLSYLLGDAQDALAIQQRAVIMSERVNGIDHPSTILEYTHLSLYSFANGHVGMSLKLLYRARYLLVLICGEDHPEVALIDSNISLILHALGEYELSLRFIEHALKLNLKYFGNKAMHVAVSYHLMARIQSCMGDFRSALNNEKETYSIYKSQLGEKHEKTRESAECLRLLTHEAVALQRKMNDIYSNGKLTSDLPPIHITPPSMGSVLEMLNTINGILFVHISQKDIVKVRSEIEKHLKTNTDENDVPDESEITSALKTIVAAVNNNDNASETEQPKDEASAAGTPTQLTNGSEESTATVSS</sequence>
<evidence type="ECO:0000250" key="1"/>
<evidence type="ECO:0000255" key="2">
    <source>
        <dbReference type="HAMAP-Rule" id="MF_03013"/>
    </source>
</evidence>
<evidence type="ECO:0000255" key="3">
    <source>
        <dbReference type="PROSITE-ProRule" id="PRU01167"/>
    </source>
</evidence>
<evidence type="ECO:0000256" key="4">
    <source>
        <dbReference type="SAM" id="MobiDB-lite"/>
    </source>
</evidence>
<organism>
    <name type="scientific">Drosophila virilis</name>
    <name type="common">Fruit fly</name>
    <dbReference type="NCBI Taxonomy" id="7244"/>
    <lineage>
        <taxon>Eukaryota</taxon>
        <taxon>Metazoa</taxon>
        <taxon>Ecdysozoa</taxon>
        <taxon>Arthropoda</taxon>
        <taxon>Hexapoda</taxon>
        <taxon>Insecta</taxon>
        <taxon>Pterygota</taxon>
        <taxon>Neoptera</taxon>
        <taxon>Endopterygota</taxon>
        <taxon>Diptera</taxon>
        <taxon>Brachycera</taxon>
        <taxon>Muscomorpha</taxon>
        <taxon>Ephydroidea</taxon>
        <taxon>Drosophilidae</taxon>
        <taxon>Drosophila</taxon>
    </lineage>
</organism>
<gene>
    <name evidence="2" type="primary">clu</name>
    <name type="ORF">GJ21424</name>
</gene>
<protein>
    <recommendedName>
        <fullName evidence="2">Protein clueless</fullName>
    </recommendedName>
    <alternativeName>
        <fullName evidence="2">Clustered mitochondria protein homolog</fullName>
    </alternativeName>
</protein>
<feature type="chain" id="PRO_0000366386" description="Protein clueless">
    <location>
        <begin position="1"/>
        <end position="1465"/>
    </location>
</feature>
<feature type="domain" description="Clu" evidence="3">
    <location>
        <begin position="427"/>
        <end position="669"/>
    </location>
</feature>
<feature type="repeat" description="TPR 1">
    <location>
        <begin position="1114"/>
        <end position="1147"/>
    </location>
</feature>
<feature type="repeat" description="TPR 2">
    <location>
        <begin position="1240"/>
        <end position="1273"/>
    </location>
</feature>
<feature type="repeat" description="TPR 3">
    <location>
        <begin position="1275"/>
        <end position="1308"/>
    </location>
</feature>
<feature type="region of interest" description="Disordered" evidence="4">
    <location>
        <begin position="1"/>
        <end position="87"/>
    </location>
</feature>
<feature type="region of interest" description="Disordered" evidence="4">
    <location>
        <begin position="742"/>
        <end position="776"/>
    </location>
</feature>
<feature type="region of interest" description="Disordered" evidence="4">
    <location>
        <begin position="962"/>
        <end position="1021"/>
    </location>
</feature>
<feature type="region of interest" description="Disordered" evidence="4">
    <location>
        <begin position="1428"/>
        <end position="1465"/>
    </location>
</feature>
<feature type="compositionally biased region" description="Low complexity" evidence="4">
    <location>
        <begin position="30"/>
        <end position="51"/>
    </location>
</feature>
<feature type="compositionally biased region" description="Basic residues" evidence="4">
    <location>
        <begin position="52"/>
        <end position="61"/>
    </location>
</feature>
<feature type="compositionally biased region" description="Basic and acidic residues" evidence="4">
    <location>
        <begin position="742"/>
        <end position="767"/>
    </location>
</feature>
<feature type="compositionally biased region" description="Basic residues" evidence="4">
    <location>
        <begin position="970"/>
        <end position="986"/>
    </location>
</feature>
<feature type="compositionally biased region" description="Low complexity" evidence="4">
    <location>
        <begin position="987"/>
        <end position="1003"/>
    </location>
</feature>
<feature type="compositionally biased region" description="Low complexity" evidence="4">
    <location>
        <begin position="1010"/>
        <end position="1020"/>
    </location>
</feature>
<feature type="compositionally biased region" description="Polar residues" evidence="4">
    <location>
        <begin position="1447"/>
        <end position="1465"/>
    </location>
</feature>
<feature type="modified residue" description="Phosphoserine" evidence="1">
    <location>
        <position position="273"/>
    </location>
</feature>
<name>CLU_DROVI</name>
<dbReference type="EMBL" id="CH940648">
    <property type="protein sequence ID" value="EDW60346.1"/>
    <property type="molecule type" value="Genomic_DNA"/>
</dbReference>
<dbReference type="RefSeq" id="XP_002049153.1">
    <property type="nucleotide sequence ID" value="XM_002049117.4"/>
</dbReference>
<dbReference type="SMR" id="B4LQ23"/>
<dbReference type="FunCoup" id="B4LQ23">
    <property type="interactions" value="1696"/>
</dbReference>
<dbReference type="STRING" id="7244.B4LQ23"/>
<dbReference type="EnsemblMetazoa" id="FBtr0237349">
    <property type="protein sequence ID" value="FBpp0235841"/>
    <property type="gene ID" value="FBgn0208550"/>
</dbReference>
<dbReference type="EnsemblMetazoa" id="XM_002049117.3">
    <property type="protein sequence ID" value="XP_002049153.1"/>
    <property type="gene ID" value="LOC6626877"/>
</dbReference>
<dbReference type="GeneID" id="6626877"/>
<dbReference type="KEGG" id="dvi:6626877"/>
<dbReference type="CTD" id="1191"/>
<dbReference type="eggNOG" id="KOG1839">
    <property type="taxonomic scope" value="Eukaryota"/>
</dbReference>
<dbReference type="HOGENOM" id="CLU_003256_1_0_1"/>
<dbReference type="InParanoid" id="B4LQ23"/>
<dbReference type="OMA" id="HPVWDKD"/>
<dbReference type="OrthoDB" id="1414216at2759"/>
<dbReference type="PhylomeDB" id="B4LQ23"/>
<dbReference type="Proteomes" id="UP000008792">
    <property type="component" value="Unassembled WGS sequence"/>
</dbReference>
<dbReference type="GO" id="GO:0005829">
    <property type="term" value="C:cytosol"/>
    <property type="evidence" value="ECO:0007669"/>
    <property type="project" value="EnsemblMetazoa"/>
</dbReference>
<dbReference type="GO" id="GO:0003729">
    <property type="term" value="F:mRNA binding"/>
    <property type="evidence" value="ECO:0007669"/>
    <property type="project" value="EnsemblMetazoa"/>
</dbReference>
<dbReference type="GO" id="GO:0043022">
    <property type="term" value="F:ribosome binding"/>
    <property type="evidence" value="ECO:0007669"/>
    <property type="project" value="EnsemblMetazoa"/>
</dbReference>
<dbReference type="GO" id="GO:0055059">
    <property type="term" value="P:asymmetric neuroblast division"/>
    <property type="evidence" value="ECO:0007669"/>
    <property type="project" value="EnsemblMetazoa"/>
</dbReference>
<dbReference type="GO" id="GO:0048312">
    <property type="term" value="P:intracellular distribution of mitochondria"/>
    <property type="evidence" value="ECO:0007669"/>
    <property type="project" value="TreeGrafter"/>
</dbReference>
<dbReference type="GO" id="GO:0007005">
    <property type="term" value="P:mitochondrion organization"/>
    <property type="evidence" value="ECO:0007669"/>
    <property type="project" value="UniProtKB-UniRule"/>
</dbReference>
<dbReference type="GO" id="GO:0033750">
    <property type="term" value="P:ribosome localization"/>
    <property type="evidence" value="ECO:0007669"/>
    <property type="project" value="EnsemblMetazoa"/>
</dbReference>
<dbReference type="CDD" id="cd15466">
    <property type="entry name" value="CLU-central"/>
    <property type="match status" value="1"/>
</dbReference>
<dbReference type="FunFam" id="3.30.2280.10:FF:000001">
    <property type="entry name" value="Clustered mitochondria (CluA/CLU1) homolog"/>
    <property type="match status" value="1"/>
</dbReference>
<dbReference type="FunFam" id="1.25.40.10:FF:000099">
    <property type="entry name" value="Clustered mitochondria protein homolog"/>
    <property type="match status" value="1"/>
</dbReference>
<dbReference type="Gene3D" id="3.30.2280.10">
    <property type="entry name" value="Hypothetical protein (hspc210)"/>
    <property type="match status" value="1"/>
</dbReference>
<dbReference type="Gene3D" id="1.25.40.10">
    <property type="entry name" value="Tetratricopeptide repeat domain"/>
    <property type="match status" value="2"/>
</dbReference>
<dbReference type="HAMAP" id="MF_03013">
    <property type="entry name" value="CLU"/>
    <property type="match status" value="1"/>
</dbReference>
<dbReference type="InterPro" id="IPR033646">
    <property type="entry name" value="CLU-central"/>
</dbReference>
<dbReference type="InterPro" id="IPR025697">
    <property type="entry name" value="CLU_dom"/>
</dbReference>
<dbReference type="InterPro" id="IPR028275">
    <property type="entry name" value="CLU_N"/>
</dbReference>
<dbReference type="InterPro" id="IPR027523">
    <property type="entry name" value="CLU_prot"/>
</dbReference>
<dbReference type="InterPro" id="IPR007967">
    <property type="entry name" value="GSKIP_dom"/>
</dbReference>
<dbReference type="InterPro" id="IPR023231">
    <property type="entry name" value="GSKIP_dom_sf"/>
</dbReference>
<dbReference type="InterPro" id="IPR011990">
    <property type="entry name" value="TPR-like_helical_dom_sf"/>
</dbReference>
<dbReference type="PANTHER" id="PTHR12601:SF6">
    <property type="entry name" value="CLUSTERED MITOCHONDRIA PROTEIN HOMOLOG"/>
    <property type="match status" value="1"/>
</dbReference>
<dbReference type="PANTHER" id="PTHR12601">
    <property type="entry name" value="EUKARYOTIC TRANSLATION INITIATION FACTOR 3 SUBUNIT EIF-3"/>
    <property type="match status" value="1"/>
</dbReference>
<dbReference type="Pfam" id="PF13236">
    <property type="entry name" value="CLU"/>
    <property type="match status" value="1"/>
</dbReference>
<dbReference type="Pfam" id="PF15044">
    <property type="entry name" value="CLU_N"/>
    <property type="match status" value="1"/>
</dbReference>
<dbReference type="Pfam" id="PF12807">
    <property type="entry name" value="eIF3_p135"/>
    <property type="match status" value="1"/>
</dbReference>
<dbReference type="Pfam" id="PF05303">
    <property type="entry name" value="GSKIP_dom"/>
    <property type="match status" value="1"/>
</dbReference>
<dbReference type="Pfam" id="PF13374">
    <property type="entry name" value="TPR_10"/>
    <property type="match status" value="1"/>
</dbReference>
<dbReference type="Pfam" id="PF13424">
    <property type="entry name" value="TPR_12"/>
    <property type="match status" value="1"/>
</dbReference>
<dbReference type="SUPFAM" id="SSF103107">
    <property type="entry name" value="Hypothetical protein c14orf129, hspc210"/>
    <property type="match status" value="1"/>
</dbReference>
<dbReference type="SUPFAM" id="SSF48452">
    <property type="entry name" value="TPR-like"/>
    <property type="match status" value="2"/>
</dbReference>
<dbReference type="PROSITE" id="PS51823">
    <property type="entry name" value="CLU"/>
    <property type="match status" value="1"/>
</dbReference>
<reference key="1">
    <citation type="journal article" date="2007" name="Nature">
        <title>Evolution of genes and genomes on the Drosophila phylogeny.</title>
        <authorList>
            <consortium name="Drosophila 12 genomes consortium"/>
        </authorList>
    </citation>
    <scope>NUCLEOTIDE SEQUENCE [LARGE SCALE GENOMIC DNA]</scope>
    <source>
        <strain>Tucson 15010-1051.87</strain>
    </source>
</reference>
<accession>B4LQ23</accession>
<proteinExistence type="inferred from homology"/>
<keyword id="KW-0963">Cytoplasm</keyword>
<keyword id="KW-0597">Phosphoprotein</keyword>
<keyword id="KW-1185">Reference proteome</keyword>
<keyword id="KW-0677">Repeat</keyword>
<keyword id="KW-0802">TPR repeat</keyword>